<accession>B8DF04</accession>
<name>RL7_LISMH</name>
<sequence length="120" mass="12441">MALNIEEIIASVKEASVLELNDLVKAIEEEFGVTAAAPVAVAAAGGGAAEQTEFTVELASAGDSKIKVIKVVREITGLGLKEAKELVDNAPKALKEGVAKDEAEEIKAKLEEVGANVEVK</sequence>
<comment type="function">
    <text evidence="1">Forms part of the ribosomal stalk which helps the ribosome interact with GTP-bound translation factors. Is thus essential for accurate translation.</text>
</comment>
<comment type="subunit">
    <text evidence="1">Homodimer. Part of the ribosomal stalk of the 50S ribosomal subunit. Forms a multimeric L10(L12)X complex, where L10 forms an elongated spine to which 2 to 4 L12 dimers bind in a sequential fashion. Binds GTP-bound translation factors.</text>
</comment>
<comment type="similarity">
    <text evidence="1">Belongs to the bacterial ribosomal protein bL12 family.</text>
</comment>
<evidence type="ECO:0000255" key="1">
    <source>
        <dbReference type="HAMAP-Rule" id="MF_00368"/>
    </source>
</evidence>
<evidence type="ECO:0000305" key="2"/>
<organism>
    <name type="scientific">Listeria monocytogenes serotype 4a (strain HCC23)</name>
    <dbReference type="NCBI Taxonomy" id="552536"/>
    <lineage>
        <taxon>Bacteria</taxon>
        <taxon>Bacillati</taxon>
        <taxon>Bacillota</taxon>
        <taxon>Bacilli</taxon>
        <taxon>Bacillales</taxon>
        <taxon>Listeriaceae</taxon>
        <taxon>Listeria</taxon>
    </lineage>
</organism>
<gene>
    <name evidence="1" type="primary">rplL</name>
    <name type="ordered locus">LMHCC_2389</name>
</gene>
<proteinExistence type="inferred from homology"/>
<keyword id="KW-0687">Ribonucleoprotein</keyword>
<keyword id="KW-0689">Ribosomal protein</keyword>
<protein>
    <recommendedName>
        <fullName evidence="1">Large ribosomal subunit protein bL12</fullName>
    </recommendedName>
    <alternativeName>
        <fullName evidence="2">50S ribosomal protein L7/L12</fullName>
    </alternativeName>
</protein>
<feature type="chain" id="PRO_1000195802" description="Large ribosomal subunit protein bL12">
    <location>
        <begin position="1"/>
        <end position="120"/>
    </location>
</feature>
<dbReference type="EMBL" id="CP001175">
    <property type="protein sequence ID" value="ACK40726.1"/>
    <property type="molecule type" value="Genomic_DNA"/>
</dbReference>
<dbReference type="RefSeq" id="WP_003729189.1">
    <property type="nucleotide sequence ID" value="NC_011660.1"/>
</dbReference>
<dbReference type="SMR" id="B8DF04"/>
<dbReference type="GeneID" id="93238165"/>
<dbReference type="KEGG" id="lmh:LMHCC_2389"/>
<dbReference type="HOGENOM" id="CLU_086499_3_2_9"/>
<dbReference type="GO" id="GO:0022625">
    <property type="term" value="C:cytosolic large ribosomal subunit"/>
    <property type="evidence" value="ECO:0007669"/>
    <property type="project" value="TreeGrafter"/>
</dbReference>
<dbReference type="GO" id="GO:0003729">
    <property type="term" value="F:mRNA binding"/>
    <property type="evidence" value="ECO:0007669"/>
    <property type="project" value="TreeGrafter"/>
</dbReference>
<dbReference type="GO" id="GO:0003735">
    <property type="term" value="F:structural constituent of ribosome"/>
    <property type="evidence" value="ECO:0007669"/>
    <property type="project" value="InterPro"/>
</dbReference>
<dbReference type="GO" id="GO:0006412">
    <property type="term" value="P:translation"/>
    <property type="evidence" value="ECO:0007669"/>
    <property type="project" value="UniProtKB-UniRule"/>
</dbReference>
<dbReference type="CDD" id="cd00387">
    <property type="entry name" value="Ribosomal_L7_L12"/>
    <property type="match status" value="1"/>
</dbReference>
<dbReference type="FunFam" id="1.20.5.710:FF:000002">
    <property type="entry name" value="50S ribosomal protein L7/L12"/>
    <property type="match status" value="1"/>
</dbReference>
<dbReference type="FunFam" id="3.30.1390.10:FF:000001">
    <property type="entry name" value="50S ribosomal protein L7/L12"/>
    <property type="match status" value="1"/>
</dbReference>
<dbReference type="Gene3D" id="3.30.1390.10">
    <property type="match status" value="1"/>
</dbReference>
<dbReference type="Gene3D" id="1.20.5.710">
    <property type="entry name" value="Single helix bin"/>
    <property type="match status" value="1"/>
</dbReference>
<dbReference type="HAMAP" id="MF_00368">
    <property type="entry name" value="Ribosomal_bL12"/>
    <property type="match status" value="1"/>
</dbReference>
<dbReference type="InterPro" id="IPR000206">
    <property type="entry name" value="Ribosomal_bL12"/>
</dbReference>
<dbReference type="InterPro" id="IPR013823">
    <property type="entry name" value="Ribosomal_bL12_C"/>
</dbReference>
<dbReference type="InterPro" id="IPR014719">
    <property type="entry name" value="Ribosomal_bL12_C/ClpS-like"/>
</dbReference>
<dbReference type="InterPro" id="IPR008932">
    <property type="entry name" value="Ribosomal_bL12_oligo"/>
</dbReference>
<dbReference type="InterPro" id="IPR036235">
    <property type="entry name" value="Ribosomal_bL12_oligo_N_sf"/>
</dbReference>
<dbReference type="NCBIfam" id="TIGR00855">
    <property type="entry name" value="L12"/>
    <property type="match status" value="1"/>
</dbReference>
<dbReference type="PANTHER" id="PTHR45987">
    <property type="entry name" value="39S RIBOSOMAL PROTEIN L12"/>
    <property type="match status" value="1"/>
</dbReference>
<dbReference type="PANTHER" id="PTHR45987:SF4">
    <property type="entry name" value="LARGE RIBOSOMAL SUBUNIT PROTEIN BL12M"/>
    <property type="match status" value="1"/>
</dbReference>
<dbReference type="Pfam" id="PF00542">
    <property type="entry name" value="Ribosomal_L12"/>
    <property type="match status" value="1"/>
</dbReference>
<dbReference type="Pfam" id="PF16320">
    <property type="entry name" value="Ribosomal_L12_N"/>
    <property type="match status" value="1"/>
</dbReference>
<dbReference type="SUPFAM" id="SSF54736">
    <property type="entry name" value="ClpS-like"/>
    <property type="match status" value="1"/>
</dbReference>
<dbReference type="SUPFAM" id="SSF48300">
    <property type="entry name" value="Ribosomal protein L7/12, oligomerisation (N-terminal) domain"/>
    <property type="match status" value="1"/>
</dbReference>
<reference key="1">
    <citation type="journal article" date="2011" name="J. Bacteriol.">
        <title>Genome sequence of lineage III Listeria monocytogenes strain HCC23.</title>
        <authorList>
            <person name="Steele C.L."/>
            <person name="Donaldson J.R."/>
            <person name="Paul D."/>
            <person name="Banes M.M."/>
            <person name="Arick T."/>
            <person name="Bridges S.M."/>
            <person name="Lawrence M.L."/>
        </authorList>
    </citation>
    <scope>NUCLEOTIDE SEQUENCE [LARGE SCALE GENOMIC DNA]</scope>
    <source>
        <strain>HCC23</strain>
    </source>
</reference>